<evidence type="ECO:0000250" key="1"/>
<evidence type="ECO:0000255" key="2">
    <source>
        <dbReference type="PROSITE-ProRule" id="PRU00686"/>
    </source>
</evidence>
<evidence type="ECO:0000305" key="3"/>
<accession>P55143</accession>
<organism>
    <name type="scientific">Ricinus communis</name>
    <name type="common">Castor bean</name>
    <dbReference type="NCBI Taxonomy" id="3988"/>
    <lineage>
        <taxon>Eukaryota</taxon>
        <taxon>Viridiplantae</taxon>
        <taxon>Streptophyta</taxon>
        <taxon>Embryophyta</taxon>
        <taxon>Tracheophyta</taxon>
        <taxon>Spermatophyta</taxon>
        <taxon>Magnoliopsida</taxon>
        <taxon>eudicotyledons</taxon>
        <taxon>Gunneridae</taxon>
        <taxon>Pentapetalae</taxon>
        <taxon>rosids</taxon>
        <taxon>fabids</taxon>
        <taxon>Malpighiales</taxon>
        <taxon>Euphorbiaceae</taxon>
        <taxon>Acalyphoideae</taxon>
        <taxon>Acalypheae</taxon>
        <taxon>Ricinus</taxon>
    </lineage>
</organism>
<protein>
    <recommendedName>
        <fullName>Glutaredoxin</fullName>
    </recommendedName>
</protein>
<reference key="1">
    <citation type="journal article" date="1997" name="Planta">
        <title>Cloning of the cDNA for glutaredoxin, an abundant sieve-tube exudate protein from Ricinus communis L. and characterisation of the glutathione-dependent thiol-reduction system in sieve tubes.</title>
        <authorList>
            <person name="Szederkenyi J."/>
            <person name="Komor E."/>
            <person name="Schobert C."/>
        </authorList>
    </citation>
    <scope>NUCLEOTIDE SEQUENCE [MRNA]</scope>
    <source>
        <strain>cv. Sanguineus</strain>
        <tissue>Cotyledon</tissue>
    </source>
</reference>
<comment type="function">
    <text>Has a glutathione-disulfide oxidoreductase activity in the presence of NADPH and glutathione reductase. Reduces low molecular weight disulfides and proteins.</text>
</comment>
<comment type="subcellular location">
    <subcellularLocation>
        <location evidence="1">Cytoplasm</location>
    </subcellularLocation>
</comment>
<comment type="similarity">
    <text evidence="3">Belongs to the glutaredoxin family. CPYC subfamily.</text>
</comment>
<keyword id="KW-0963">Cytoplasm</keyword>
<keyword id="KW-1015">Disulfide bond</keyword>
<keyword id="KW-0249">Electron transport</keyword>
<keyword id="KW-0676">Redox-active center</keyword>
<keyword id="KW-0813">Transport</keyword>
<proteinExistence type="inferred from homology"/>
<dbReference type="EMBL" id="Z49699">
    <property type="protein sequence ID" value="CAA89699.1"/>
    <property type="molecule type" value="mRNA"/>
</dbReference>
<dbReference type="PIR" id="S54825">
    <property type="entry name" value="S54825"/>
</dbReference>
<dbReference type="RefSeq" id="NP_001411077.1">
    <property type="nucleotide sequence ID" value="NM_001424148.1"/>
</dbReference>
<dbReference type="RefSeq" id="XP_002524673.1">
    <property type="nucleotide sequence ID" value="XM_002524627.2"/>
</dbReference>
<dbReference type="SMR" id="P55143"/>
<dbReference type="GeneID" id="8289824"/>
<dbReference type="KEGG" id="rcu:8289824"/>
<dbReference type="eggNOG" id="KOG1752">
    <property type="taxonomic scope" value="Eukaryota"/>
</dbReference>
<dbReference type="OMA" id="IYTSPLC"/>
<dbReference type="OrthoDB" id="418495at2759"/>
<dbReference type="GO" id="GO:0005737">
    <property type="term" value="C:cytoplasm"/>
    <property type="evidence" value="ECO:0007669"/>
    <property type="project" value="UniProtKB-SubCell"/>
</dbReference>
<dbReference type="CDD" id="cd03419">
    <property type="entry name" value="GRX_GRXh_1_2_like"/>
    <property type="match status" value="1"/>
</dbReference>
<dbReference type="FunFam" id="3.40.30.10:FF:000093">
    <property type="entry name" value="Glutaredoxin 2"/>
    <property type="match status" value="1"/>
</dbReference>
<dbReference type="Gene3D" id="3.40.30.10">
    <property type="entry name" value="Glutaredoxin"/>
    <property type="match status" value="1"/>
</dbReference>
<dbReference type="InterPro" id="IPR011767">
    <property type="entry name" value="GLR_AS"/>
</dbReference>
<dbReference type="InterPro" id="IPR002109">
    <property type="entry name" value="Glutaredoxin"/>
</dbReference>
<dbReference type="InterPro" id="IPR011899">
    <property type="entry name" value="Glutaredoxin_euk/vir"/>
</dbReference>
<dbReference type="InterPro" id="IPR014025">
    <property type="entry name" value="Glutaredoxin_subgr"/>
</dbReference>
<dbReference type="InterPro" id="IPR036249">
    <property type="entry name" value="Thioredoxin-like_sf"/>
</dbReference>
<dbReference type="NCBIfam" id="TIGR02180">
    <property type="entry name" value="GRX_euk"/>
    <property type="match status" value="1"/>
</dbReference>
<dbReference type="PANTHER" id="PTHR45694">
    <property type="entry name" value="GLUTAREDOXIN 2"/>
    <property type="match status" value="1"/>
</dbReference>
<dbReference type="PANTHER" id="PTHR45694:SF14">
    <property type="entry name" value="GLUTAREDOXIN-C2"/>
    <property type="match status" value="1"/>
</dbReference>
<dbReference type="Pfam" id="PF00462">
    <property type="entry name" value="Glutaredoxin"/>
    <property type="match status" value="1"/>
</dbReference>
<dbReference type="PRINTS" id="PR00160">
    <property type="entry name" value="GLUTAREDOXIN"/>
</dbReference>
<dbReference type="SUPFAM" id="SSF52833">
    <property type="entry name" value="Thioredoxin-like"/>
    <property type="match status" value="1"/>
</dbReference>
<dbReference type="PROSITE" id="PS00195">
    <property type="entry name" value="GLUTAREDOXIN_1"/>
    <property type="match status" value="1"/>
</dbReference>
<dbReference type="PROSITE" id="PS51354">
    <property type="entry name" value="GLUTAREDOXIN_2"/>
    <property type="match status" value="1"/>
</dbReference>
<name>GLRX_RICCO</name>
<sequence>MAMTKTKELVSSNAVVVFSKTYCPYCTSVKKLLDQLGAKYKVVELDTESDGSEIQTALAEWTGQRTVPNVFIGGKHIGGCDSTTAKHSQGQLVPLLTEAGAV</sequence>
<feature type="chain" id="PRO_0000141608" description="Glutaredoxin">
    <location>
        <begin position="1"/>
        <end position="102"/>
    </location>
</feature>
<feature type="domain" description="Glutaredoxin" evidence="2">
    <location>
        <begin position="3"/>
        <end position="102"/>
    </location>
</feature>
<feature type="disulfide bond" description="Redox-active" evidence="1">
    <location>
        <begin position="23"/>
        <end position="26"/>
    </location>
</feature>